<name>RL30_LACAC</name>
<feature type="chain" id="PRO_1000056051" description="Large ribosomal subunit protein uL30">
    <location>
        <begin position="1"/>
        <end position="61"/>
    </location>
</feature>
<accession>Q5FM73</accession>
<dbReference type="EMBL" id="CP000033">
    <property type="protein sequence ID" value="AAV42201.1"/>
    <property type="molecule type" value="Genomic_DNA"/>
</dbReference>
<dbReference type="RefSeq" id="WP_003549042.1">
    <property type="nucleotide sequence ID" value="NC_006814.3"/>
</dbReference>
<dbReference type="RefSeq" id="YP_193232.1">
    <property type="nucleotide sequence ID" value="NC_006814.3"/>
</dbReference>
<dbReference type="SMR" id="Q5FM73"/>
<dbReference type="STRING" id="272621.LBA0308"/>
<dbReference type="GeneID" id="93290583"/>
<dbReference type="KEGG" id="lac:LBA0308"/>
<dbReference type="PATRIC" id="fig|272621.13.peg.295"/>
<dbReference type="eggNOG" id="COG1841">
    <property type="taxonomic scope" value="Bacteria"/>
</dbReference>
<dbReference type="HOGENOM" id="CLU_131047_2_1_9"/>
<dbReference type="OrthoDB" id="9812790at2"/>
<dbReference type="BioCyc" id="LACI272621:G1G49-303-MONOMER"/>
<dbReference type="Proteomes" id="UP000006381">
    <property type="component" value="Chromosome"/>
</dbReference>
<dbReference type="GO" id="GO:0015934">
    <property type="term" value="C:large ribosomal subunit"/>
    <property type="evidence" value="ECO:0007669"/>
    <property type="project" value="InterPro"/>
</dbReference>
<dbReference type="GO" id="GO:0003735">
    <property type="term" value="F:structural constituent of ribosome"/>
    <property type="evidence" value="ECO:0007669"/>
    <property type="project" value="InterPro"/>
</dbReference>
<dbReference type="GO" id="GO:0006412">
    <property type="term" value="P:translation"/>
    <property type="evidence" value="ECO:0007669"/>
    <property type="project" value="UniProtKB-UniRule"/>
</dbReference>
<dbReference type="CDD" id="cd01658">
    <property type="entry name" value="Ribosomal_L30"/>
    <property type="match status" value="1"/>
</dbReference>
<dbReference type="Gene3D" id="3.30.1390.20">
    <property type="entry name" value="Ribosomal protein L30, ferredoxin-like fold domain"/>
    <property type="match status" value="1"/>
</dbReference>
<dbReference type="HAMAP" id="MF_01371_B">
    <property type="entry name" value="Ribosomal_uL30_B"/>
    <property type="match status" value="1"/>
</dbReference>
<dbReference type="InterPro" id="IPR036919">
    <property type="entry name" value="Ribo_uL30_ferredoxin-like_sf"/>
</dbReference>
<dbReference type="InterPro" id="IPR005996">
    <property type="entry name" value="Ribosomal_uL30_bac-type"/>
</dbReference>
<dbReference type="InterPro" id="IPR016082">
    <property type="entry name" value="Ribosomal_uL30_ferredoxin-like"/>
</dbReference>
<dbReference type="NCBIfam" id="TIGR01308">
    <property type="entry name" value="rpmD_bact"/>
    <property type="match status" value="1"/>
</dbReference>
<dbReference type="Pfam" id="PF00327">
    <property type="entry name" value="Ribosomal_L30"/>
    <property type="match status" value="1"/>
</dbReference>
<dbReference type="PIRSF" id="PIRSF002211">
    <property type="entry name" value="Ribosomal_L30_bac-type"/>
    <property type="match status" value="1"/>
</dbReference>
<dbReference type="SUPFAM" id="SSF55129">
    <property type="entry name" value="Ribosomal protein L30p/L7e"/>
    <property type="match status" value="1"/>
</dbReference>
<organism>
    <name type="scientific">Lactobacillus acidophilus (strain ATCC 700396 / NCK56 / N2 / NCFM)</name>
    <dbReference type="NCBI Taxonomy" id="272621"/>
    <lineage>
        <taxon>Bacteria</taxon>
        <taxon>Bacillati</taxon>
        <taxon>Bacillota</taxon>
        <taxon>Bacilli</taxon>
        <taxon>Lactobacillales</taxon>
        <taxon>Lactobacillaceae</taxon>
        <taxon>Lactobacillus</taxon>
    </lineage>
</organism>
<protein>
    <recommendedName>
        <fullName evidence="1">Large ribosomal subunit protein uL30</fullName>
    </recommendedName>
    <alternativeName>
        <fullName evidence="2">50S ribosomal protein L30</fullName>
    </alternativeName>
</protein>
<evidence type="ECO:0000255" key="1">
    <source>
        <dbReference type="HAMAP-Rule" id="MF_01371"/>
    </source>
</evidence>
<evidence type="ECO:0000305" key="2"/>
<keyword id="KW-1185">Reference proteome</keyword>
<keyword id="KW-0687">Ribonucleoprotein</keyword>
<keyword id="KW-0689">Ribosomal protein</keyword>
<comment type="subunit">
    <text evidence="1">Part of the 50S ribosomal subunit.</text>
</comment>
<comment type="similarity">
    <text evidence="1">Belongs to the universal ribosomal protein uL30 family.</text>
</comment>
<sequence length="61" mass="6656">MTDLKITLIRSAAHRLPEQRKIVKALGLGRVDSTVVLPDNAATRGALLKIAHLISVEEINK</sequence>
<reference key="1">
    <citation type="journal article" date="2005" name="Proc. Natl. Acad. Sci. U.S.A.">
        <title>Complete genome sequence of the probiotic lactic acid bacterium Lactobacillus acidophilus NCFM.</title>
        <authorList>
            <person name="Altermann E."/>
            <person name="Russell W.M."/>
            <person name="Azcarate-Peril M.A."/>
            <person name="Barrangou R."/>
            <person name="Buck B.L."/>
            <person name="McAuliffe O."/>
            <person name="Souther N."/>
            <person name="Dobson A."/>
            <person name="Duong T."/>
            <person name="Callanan M."/>
            <person name="Lick S."/>
            <person name="Hamrick A."/>
            <person name="Cano R."/>
            <person name="Klaenhammer T.R."/>
        </authorList>
    </citation>
    <scope>NUCLEOTIDE SEQUENCE [LARGE SCALE GENOMIC DNA]</scope>
    <source>
        <strain>ATCC 700396 / NCK56 / N2 / NCFM</strain>
    </source>
</reference>
<gene>
    <name evidence="1" type="primary">rpmD</name>
    <name type="ordered locus">LBA0308</name>
</gene>
<proteinExistence type="inferred from homology"/>